<organism>
    <name type="scientific">Pseudoalteromonas atlantica (strain T6c / ATCC BAA-1087)</name>
    <dbReference type="NCBI Taxonomy" id="3042615"/>
    <lineage>
        <taxon>Bacteria</taxon>
        <taxon>Pseudomonadati</taxon>
        <taxon>Pseudomonadota</taxon>
        <taxon>Gammaproteobacteria</taxon>
        <taxon>Alteromonadales</taxon>
        <taxon>Alteromonadaceae</taxon>
        <taxon>Paraglaciecola</taxon>
    </lineage>
</organism>
<gene>
    <name evidence="1" type="primary">ttcA</name>
    <name type="ordered locus">Patl_2064</name>
</gene>
<dbReference type="EC" id="2.8.1.-" evidence="1"/>
<dbReference type="EMBL" id="CP000388">
    <property type="protein sequence ID" value="ABG40582.1"/>
    <property type="molecule type" value="Genomic_DNA"/>
</dbReference>
<dbReference type="RefSeq" id="WP_011574872.1">
    <property type="nucleotide sequence ID" value="NC_008228.1"/>
</dbReference>
<dbReference type="SMR" id="Q15U56"/>
<dbReference type="STRING" id="342610.Patl_2064"/>
<dbReference type="KEGG" id="pat:Patl_2064"/>
<dbReference type="eggNOG" id="COG0037">
    <property type="taxonomic scope" value="Bacteria"/>
</dbReference>
<dbReference type="HOGENOM" id="CLU_026481_0_0_6"/>
<dbReference type="OrthoDB" id="9801054at2"/>
<dbReference type="Proteomes" id="UP000001981">
    <property type="component" value="Chromosome"/>
</dbReference>
<dbReference type="GO" id="GO:0005737">
    <property type="term" value="C:cytoplasm"/>
    <property type="evidence" value="ECO:0007669"/>
    <property type="project" value="UniProtKB-SubCell"/>
</dbReference>
<dbReference type="GO" id="GO:0051539">
    <property type="term" value="F:4 iron, 4 sulfur cluster binding"/>
    <property type="evidence" value="ECO:0007669"/>
    <property type="project" value="UniProtKB-UniRule"/>
</dbReference>
<dbReference type="GO" id="GO:0005524">
    <property type="term" value="F:ATP binding"/>
    <property type="evidence" value="ECO:0007669"/>
    <property type="project" value="UniProtKB-UniRule"/>
</dbReference>
<dbReference type="GO" id="GO:0000287">
    <property type="term" value="F:magnesium ion binding"/>
    <property type="evidence" value="ECO:0007669"/>
    <property type="project" value="UniProtKB-UniRule"/>
</dbReference>
<dbReference type="GO" id="GO:0016783">
    <property type="term" value="F:sulfurtransferase activity"/>
    <property type="evidence" value="ECO:0007669"/>
    <property type="project" value="UniProtKB-UniRule"/>
</dbReference>
<dbReference type="GO" id="GO:0000049">
    <property type="term" value="F:tRNA binding"/>
    <property type="evidence" value="ECO:0007669"/>
    <property type="project" value="UniProtKB-KW"/>
</dbReference>
<dbReference type="GO" id="GO:0034227">
    <property type="term" value="P:tRNA thio-modification"/>
    <property type="evidence" value="ECO:0007669"/>
    <property type="project" value="UniProtKB-UniRule"/>
</dbReference>
<dbReference type="CDD" id="cd24138">
    <property type="entry name" value="TtcA-like"/>
    <property type="match status" value="1"/>
</dbReference>
<dbReference type="Gene3D" id="3.40.50.620">
    <property type="entry name" value="HUPs"/>
    <property type="match status" value="1"/>
</dbReference>
<dbReference type="HAMAP" id="MF_01850">
    <property type="entry name" value="TtcA"/>
    <property type="match status" value="1"/>
</dbReference>
<dbReference type="InterPro" id="IPR014729">
    <property type="entry name" value="Rossmann-like_a/b/a_fold"/>
</dbReference>
<dbReference type="InterPro" id="IPR011063">
    <property type="entry name" value="TilS/TtcA_N"/>
</dbReference>
<dbReference type="InterPro" id="IPR012089">
    <property type="entry name" value="tRNA_Cyd_32_2_STrfase"/>
</dbReference>
<dbReference type="NCBIfam" id="NF007972">
    <property type="entry name" value="PRK10696.1"/>
    <property type="match status" value="1"/>
</dbReference>
<dbReference type="PANTHER" id="PTHR43686:SF1">
    <property type="entry name" value="AMINOTRAN_5 DOMAIN-CONTAINING PROTEIN"/>
    <property type="match status" value="1"/>
</dbReference>
<dbReference type="PANTHER" id="PTHR43686">
    <property type="entry name" value="SULFURTRANSFERASE-RELATED"/>
    <property type="match status" value="1"/>
</dbReference>
<dbReference type="Pfam" id="PF01171">
    <property type="entry name" value="ATP_bind_3"/>
    <property type="match status" value="1"/>
</dbReference>
<dbReference type="SUPFAM" id="SSF52402">
    <property type="entry name" value="Adenine nucleotide alpha hydrolases-like"/>
    <property type="match status" value="1"/>
</dbReference>
<protein>
    <recommendedName>
        <fullName evidence="1">tRNA-cytidine(32) 2-sulfurtransferase</fullName>
        <ecNumber evidence="1">2.8.1.-</ecNumber>
    </recommendedName>
    <alternativeName>
        <fullName evidence="1">Two-thiocytidine biosynthesis protein A</fullName>
    </alternativeName>
    <alternativeName>
        <fullName evidence="1">tRNA 2-thiocytidine biosynthesis protein TtcA</fullName>
    </alternativeName>
</protein>
<reference key="1">
    <citation type="submission" date="2006-06" db="EMBL/GenBank/DDBJ databases">
        <title>Complete sequence of Pseudoalteromonas atlantica T6c.</title>
        <authorList>
            <consortium name="US DOE Joint Genome Institute"/>
            <person name="Copeland A."/>
            <person name="Lucas S."/>
            <person name="Lapidus A."/>
            <person name="Barry K."/>
            <person name="Detter J.C."/>
            <person name="Glavina del Rio T."/>
            <person name="Hammon N."/>
            <person name="Israni S."/>
            <person name="Dalin E."/>
            <person name="Tice H."/>
            <person name="Pitluck S."/>
            <person name="Saunders E."/>
            <person name="Brettin T."/>
            <person name="Bruce D."/>
            <person name="Han C."/>
            <person name="Tapia R."/>
            <person name="Gilna P."/>
            <person name="Schmutz J."/>
            <person name="Larimer F."/>
            <person name="Land M."/>
            <person name="Hauser L."/>
            <person name="Kyrpides N."/>
            <person name="Kim E."/>
            <person name="Karls A.C."/>
            <person name="Bartlett D."/>
            <person name="Higgins B.P."/>
            <person name="Richardson P."/>
        </authorList>
    </citation>
    <scope>NUCLEOTIDE SEQUENCE [LARGE SCALE GENOMIC DNA]</scope>
    <source>
        <strain>T6c / ATCC BAA-1087</strain>
    </source>
</reference>
<comment type="function">
    <text evidence="1">Catalyzes the ATP-dependent 2-thiolation of cytidine in position 32 of tRNA, to form 2-thiocytidine (s(2)C32). The sulfur atoms are provided by the cysteine/cysteine desulfurase (IscS) system.</text>
</comment>
<comment type="catalytic activity">
    <reaction evidence="1">
        <text>cytidine(32) in tRNA + S-sulfanyl-L-cysteinyl-[cysteine desulfurase] + AH2 + ATP = 2-thiocytidine(32) in tRNA + L-cysteinyl-[cysteine desulfurase] + A + AMP + diphosphate + H(+)</text>
        <dbReference type="Rhea" id="RHEA:57048"/>
        <dbReference type="Rhea" id="RHEA-COMP:10288"/>
        <dbReference type="Rhea" id="RHEA-COMP:12157"/>
        <dbReference type="Rhea" id="RHEA-COMP:12158"/>
        <dbReference type="Rhea" id="RHEA-COMP:14821"/>
        <dbReference type="ChEBI" id="CHEBI:13193"/>
        <dbReference type="ChEBI" id="CHEBI:15378"/>
        <dbReference type="ChEBI" id="CHEBI:17499"/>
        <dbReference type="ChEBI" id="CHEBI:29950"/>
        <dbReference type="ChEBI" id="CHEBI:30616"/>
        <dbReference type="ChEBI" id="CHEBI:33019"/>
        <dbReference type="ChEBI" id="CHEBI:61963"/>
        <dbReference type="ChEBI" id="CHEBI:82748"/>
        <dbReference type="ChEBI" id="CHEBI:141453"/>
        <dbReference type="ChEBI" id="CHEBI:456215"/>
    </reaction>
    <physiologicalReaction direction="left-to-right" evidence="1">
        <dbReference type="Rhea" id="RHEA:57049"/>
    </physiologicalReaction>
</comment>
<comment type="cofactor">
    <cofactor evidence="1">
        <name>Mg(2+)</name>
        <dbReference type="ChEBI" id="CHEBI:18420"/>
    </cofactor>
</comment>
<comment type="cofactor">
    <cofactor evidence="1">
        <name>[4Fe-4S] cluster</name>
        <dbReference type="ChEBI" id="CHEBI:49883"/>
    </cofactor>
    <text evidence="1">Binds 1 [4Fe-4S] cluster per subunit. The cluster is chelated by three Cys residues, the fourth Fe has a free coordination site that may bind a sulfur atom transferred from the persulfide of IscS.</text>
</comment>
<comment type="pathway">
    <text evidence="1">tRNA modification.</text>
</comment>
<comment type="subunit">
    <text evidence="1">Homodimer.</text>
</comment>
<comment type="subcellular location">
    <subcellularLocation>
        <location evidence="1">Cytoplasm</location>
    </subcellularLocation>
</comment>
<comment type="miscellaneous">
    <text evidence="1">The thiolation reaction likely consists of two steps: a first activation step by ATP to form an adenylated intermediate of the target base of tRNA, and a second nucleophilic substitution step of the sulfur (S) atom supplied by the hydrosulfide attached to the Fe-S cluster.</text>
</comment>
<comment type="similarity">
    <text evidence="1">Belongs to the TtcA family.</text>
</comment>
<feature type="chain" id="PRO_0000348789" description="tRNA-cytidine(32) 2-sulfurtransferase">
    <location>
        <begin position="1"/>
        <end position="318"/>
    </location>
</feature>
<feature type="region of interest" description="Disordered" evidence="2">
    <location>
        <begin position="1"/>
        <end position="29"/>
    </location>
</feature>
<feature type="short sequence motif" description="PP-loop motif" evidence="1">
    <location>
        <begin position="64"/>
        <end position="69"/>
    </location>
</feature>
<feature type="compositionally biased region" description="Polar residues" evidence="2">
    <location>
        <begin position="16"/>
        <end position="27"/>
    </location>
</feature>
<feature type="binding site" evidence="1">
    <location>
        <position position="139"/>
    </location>
    <ligand>
        <name>[4Fe-4S] cluster</name>
        <dbReference type="ChEBI" id="CHEBI:49883"/>
    </ligand>
</feature>
<feature type="binding site" evidence="1">
    <location>
        <position position="142"/>
    </location>
    <ligand>
        <name>[4Fe-4S] cluster</name>
        <dbReference type="ChEBI" id="CHEBI:49883"/>
    </ligand>
</feature>
<feature type="binding site" evidence="1">
    <location>
        <position position="230"/>
    </location>
    <ligand>
        <name>[4Fe-4S] cluster</name>
        <dbReference type="ChEBI" id="CHEBI:49883"/>
    </ligand>
</feature>
<evidence type="ECO:0000255" key="1">
    <source>
        <dbReference type="HAMAP-Rule" id="MF_01850"/>
    </source>
</evidence>
<evidence type="ECO:0000256" key="2">
    <source>
        <dbReference type="SAM" id="MobiDB-lite"/>
    </source>
</evidence>
<name>TTCA_PSEA6</name>
<accession>Q15U56</accession>
<keyword id="KW-0004">4Fe-4S</keyword>
<keyword id="KW-0067">ATP-binding</keyword>
<keyword id="KW-0963">Cytoplasm</keyword>
<keyword id="KW-0408">Iron</keyword>
<keyword id="KW-0411">Iron-sulfur</keyword>
<keyword id="KW-0460">Magnesium</keyword>
<keyword id="KW-0479">Metal-binding</keyword>
<keyword id="KW-0547">Nucleotide-binding</keyword>
<keyword id="KW-0694">RNA-binding</keyword>
<keyword id="KW-0808">Transferase</keyword>
<keyword id="KW-0819">tRNA processing</keyword>
<keyword id="KW-0820">tRNA-binding</keyword>
<sequence length="318" mass="35315">MNHVSSTKPDTAPSKHLTSSHIDATDQNNKRLKKLTTKLRRKTGQAIADFNMIEEGDKVMVCLSGGKDSYTMLDMLLHMQKAAPISFSIIAVNLDQKQPGFPEHVLPNYLEGLGVDFAIIEEDTYSIVVDKVPEGKTTCSLCSRLRRGILYSNAIKMGVTKIALGHHRDDMLETLFLNMFHNGRLKSMPPKLTSDDGRNVVIRPLAYCAEQDIADYSILSGFPIIPCNLCGSQENLQRKQVKLMLAQWNTQFPGRIETMFKALQNVVPSHLADPGAFNFNDLDHSNSTSIEGDTAFDPLELTPVTKVDTLAVPITRID</sequence>
<proteinExistence type="inferred from homology"/>